<dbReference type="SMR" id="P0C6A6"/>
<dbReference type="GO" id="GO:0005576">
    <property type="term" value="C:extracellular region"/>
    <property type="evidence" value="ECO:0007669"/>
    <property type="project" value="UniProtKB-SubCell"/>
</dbReference>
<dbReference type="GO" id="GO:0090729">
    <property type="term" value="F:toxin activity"/>
    <property type="evidence" value="ECO:0007669"/>
    <property type="project" value="UniProtKB-KW"/>
</dbReference>
<dbReference type="Gene3D" id="4.10.70.10">
    <property type="entry name" value="Disintegrin domain"/>
    <property type="match status" value="1"/>
</dbReference>
<dbReference type="InterPro" id="IPR018358">
    <property type="entry name" value="Disintegrin_CS"/>
</dbReference>
<dbReference type="InterPro" id="IPR001762">
    <property type="entry name" value="Disintegrin_dom"/>
</dbReference>
<dbReference type="InterPro" id="IPR036436">
    <property type="entry name" value="Disintegrin_dom_sf"/>
</dbReference>
<dbReference type="PANTHER" id="PTHR11905">
    <property type="entry name" value="ADAM A DISINTEGRIN AND METALLOPROTEASE DOMAIN"/>
    <property type="match status" value="1"/>
</dbReference>
<dbReference type="PANTHER" id="PTHR11905:SF159">
    <property type="entry name" value="ADAM METALLOPROTEASE"/>
    <property type="match status" value="1"/>
</dbReference>
<dbReference type="Pfam" id="PF00200">
    <property type="entry name" value="Disintegrin"/>
    <property type="match status" value="1"/>
</dbReference>
<dbReference type="PRINTS" id="PR00289">
    <property type="entry name" value="DISINTEGRIN"/>
</dbReference>
<dbReference type="SMART" id="SM00050">
    <property type="entry name" value="DISIN"/>
    <property type="match status" value="1"/>
</dbReference>
<dbReference type="SUPFAM" id="SSF57552">
    <property type="entry name" value="Blood coagulation inhibitor (disintegrin)"/>
    <property type="match status" value="1"/>
</dbReference>
<dbReference type="PROSITE" id="PS00427">
    <property type="entry name" value="DISINTEGRIN_1"/>
    <property type="match status" value="1"/>
</dbReference>
<dbReference type="PROSITE" id="PS50214">
    <property type="entry name" value="DISINTEGRIN_2"/>
    <property type="match status" value="1"/>
</dbReference>
<accession>P0C6A6</accession>
<proteinExistence type="evidence at protein level"/>
<evidence type="ECO:0000255" key="1">
    <source>
        <dbReference type="PROSITE-ProRule" id="PRU00068"/>
    </source>
</evidence>
<evidence type="ECO:0000269" key="2">
    <source>
    </source>
</evidence>
<evidence type="ECO:0000305" key="3"/>
<evidence type="ECO:0000305" key="4">
    <source>
    </source>
</evidence>
<feature type="chain" id="PRO_0000319021" description="Disintegrin VB7A">
    <location>
        <begin position="1"/>
        <end position="64"/>
    </location>
</feature>
<feature type="domain" description="Disintegrin" evidence="1">
    <location>
        <begin position="1"/>
        <end position="64"/>
    </location>
</feature>
<feature type="short sequence motif" description="Cell attachment site">
    <location>
        <begin position="42"/>
        <end position="44"/>
    </location>
</feature>
<feature type="disulfide bond" evidence="1">
    <location>
        <begin position="6"/>
        <end position="29"/>
    </location>
</feature>
<feature type="disulfide bond" description="Interchain (with C-11 in VB7A)" evidence="1">
    <location>
        <position position="7"/>
    </location>
</feature>
<feature type="disulfide bond" description="Interchain (with C-16 in VB7A)" evidence="1">
    <location>
        <position position="12"/>
    </location>
</feature>
<feature type="disulfide bond" evidence="1">
    <location>
        <begin position="20"/>
        <end position="26"/>
    </location>
</feature>
<feature type="disulfide bond" evidence="1">
    <location>
        <begin position="25"/>
        <end position="50"/>
    </location>
</feature>
<feature type="disulfide bond" evidence="1">
    <location>
        <begin position="38"/>
        <end position="57"/>
    </location>
</feature>
<protein>
    <recommendedName>
        <fullName>Disintegrin VB7A</fullName>
    </recommendedName>
</protein>
<reference key="1">
    <citation type="journal article" date="2003" name="Biochem. J.">
        <title>Snake venom disintegrins: novel dimeric disintegrins and structural diversification by disulphide bond engineering.</title>
        <authorList>
            <person name="Calvete J.J."/>
            <person name="Moreno-Murciano M.P."/>
            <person name="Theakston R.D.G."/>
            <person name="Kisiel D.G."/>
            <person name="Marcinkiewicz C."/>
        </authorList>
    </citation>
    <scope>PROTEIN SEQUENCE</scope>
    <scope>FUNCTION</scope>
    <scope>SUBUNIT</scope>
    <scope>SUBCELLULAR LOCATION</scope>
    <source>
        <tissue>Venom</tissue>
    </source>
</reference>
<organism>
    <name type="scientific">Vipera berus berus</name>
    <name type="common">Common viper</name>
    <dbReference type="NCBI Taxonomy" id="31156"/>
    <lineage>
        <taxon>Eukaryota</taxon>
        <taxon>Metazoa</taxon>
        <taxon>Chordata</taxon>
        <taxon>Craniata</taxon>
        <taxon>Vertebrata</taxon>
        <taxon>Euteleostomi</taxon>
        <taxon>Lepidosauria</taxon>
        <taxon>Squamata</taxon>
        <taxon>Bifurcata</taxon>
        <taxon>Unidentata</taxon>
        <taxon>Episquamata</taxon>
        <taxon>Toxicofera</taxon>
        <taxon>Serpentes</taxon>
        <taxon>Colubroidea</taxon>
        <taxon>Viperidae</taxon>
        <taxon>Viperinae</taxon>
        <taxon>Vipera</taxon>
    </lineage>
</organism>
<keyword id="KW-1217">Cell adhesion impairing toxin</keyword>
<keyword id="KW-0903">Direct protein sequencing</keyword>
<keyword id="KW-1015">Disulfide bond</keyword>
<keyword id="KW-1199">Hemostasis impairing toxin</keyword>
<keyword id="KW-1201">Platelet aggregation inhibiting toxin</keyword>
<keyword id="KW-0964">Secreted</keyword>
<keyword id="KW-0800">Toxin</keyword>
<comment type="function">
    <text evidence="2">Poor inhibitor of platelet aggregation. The disintegrin inhibits the adhesion of cells expressing the RGD-dependent integrin alpha-5/beta-1 (ITGA5/ITGB1) to immobilized fibronectin. Inhibition on alpha-2b/beta-3 (ITGA2B/ITGB3) is low.</text>
</comment>
<comment type="subunit">
    <text evidence="2">Heterodimer with VB7B; disulfide-linked.</text>
</comment>
<comment type="subcellular location">
    <subcellularLocation>
        <location evidence="2">Secreted</location>
    </subcellularLocation>
</comment>
<comment type="tissue specificity">
    <text>Expressed by the venom gland.</text>
</comment>
<comment type="miscellaneous">
    <text evidence="4">Negative results: does not inhibit alpha-1/beta-1 (ITGA1/ITGB1), alpha-2/beta-1 (ITGA2/ITGB1) and alpha-6/beta-1 (ITGA6/ITGB1).</text>
</comment>
<comment type="similarity">
    <text evidence="3">Belongs to the disintegrin family. Dimeric disintegrin subfamily.</text>
</comment>
<name>DID7A_VIPBB</name>
<sequence>NSGNPCCDPVTCKPRRGEHCVSGPCCRNCKFLNAGTICKYARGDDMNDYCTGISSDCPRNPYKD</sequence>